<feature type="chain" id="PRO_1000045620" description="Glycine dehydrogenase (decarboxylating)">
    <location>
        <begin position="1"/>
        <end position="954"/>
    </location>
</feature>
<feature type="modified residue" description="N6-(pyridoxal phosphate)lysine" evidence="1">
    <location>
        <position position="704"/>
    </location>
</feature>
<evidence type="ECO:0000255" key="1">
    <source>
        <dbReference type="HAMAP-Rule" id="MF_00711"/>
    </source>
</evidence>
<comment type="function">
    <text evidence="1">The glycine cleavage system catalyzes the degradation of glycine. The P protein binds the alpha-amino group of glycine through its pyridoxal phosphate cofactor; CO(2) is released and the remaining methylamine moiety is then transferred to the lipoamide cofactor of the H protein.</text>
</comment>
<comment type="catalytic activity">
    <reaction evidence="1">
        <text>N(6)-[(R)-lipoyl]-L-lysyl-[glycine-cleavage complex H protein] + glycine + H(+) = N(6)-[(R)-S(8)-aminomethyldihydrolipoyl]-L-lysyl-[glycine-cleavage complex H protein] + CO2</text>
        <dbReference type="Rhea" id="RHEA:24304"/>
        <dbReference type="Rhea" id="RHEA-COMP:10494"/>
        <dbReference type="Rhea" id="RHEA-COMP:10495"/>
        <dbReference type="ChEBI" id="CHEBI:15378"/>
        <dbReference type="ChEBI" id="CHEBI:16526"/>
        <dbReference type="ChEBI" id="CHEBI:57305"/>
        <dbReference type="ChEBI" id="CHEBI:83099"/>
        <dbReference type="ChEBI" id="CHEBI:83143"/>
        <dbReference type="EC" id="1.4.4.2"/>
    </reaction>
</comment>
<comment type="cofactor">
    <cofactor evidence="1">
        <name>pyridoxal 5'-phosphate</name>
        <dbReference type="ChEBI" id="CHEBI:597326"/>
    </cofactor>
</comment>
<comment type="subunit">
    <text evidence="1">The glycine cleavage system is composed of four proteins: P, T, L and H.</text>
</comment>
<comment type="similarity">
    <text evidence="1">Belongs to the GcvP family.</text>
</comment>
<proteinExistence type="inferred from homology"/>
<reference key="1">
    <citation type="submission" date="2007-06" db="EMBL/GenBank/DDBJ databases">
        <title>Complete sequence of Sinorhizobium medicae WSM419 chromosome.</title>
        <authorList>
            <consortium name="US DOE Joint Genome Institute"/>
            <person name="Copeland A."/>
            <person name="Lucas S."/>
            <person name="Lapidus A."/>
            <person name="Barry K."/>
            <person name="Glavina del Rio T."/>
            <person name="Dalin E."/>
            <person name="Tice H."/>
            <person name="Pitluck S."/>
            <person name="Chain P."/>
            <person name="Malfatti S."/>
            <person name="Shin M."/>
            <person name="Vergez L."/>
            <person name="Schmutz J."/>
            <person name="Larimer F."/>
            <person name="Land M."/>
            <person name="Hauser L."/>
            <person name="Kyrpides N."/>
            <person name="Mikhailova N."/>
            <person name="Reeve W.G."/>
            <person name="Richardson P."/>
        </authorList>
    </citation>
    <scope>NUCLEOTIDE SEQUENCE [LARGE SCALE GENOMIC DNA]</scope>
    <source>
        <strain>WSM419</strain>
    </source>
</reference>
<organism>
    <name type="scientific">Sinorhizobium medicae (strain WSM419)</name>
    <name type="common">Ensifer medicae</name>
    <dbReference type="NCBI Taxonomy" id="366394"/>
    <lineage>
        <taxon>Bacteria</taxon>
        <taxon>Pseudomonadati</taxon>
        <taxon>Pseudomonadota</taxon>
        <taxon>Alphaproteobacteria</taxon>
        <taxon>Hyphomicrobiales</taxon>
        <taxon>Rhizobiaceae</taxon>
        <taxon>Sinorhizobium/Ensifer group</taxon>
        <taxon>Sinorhizobium</taxon>
    </lineage>
</organism>
<gene>
    <name evidence="1" type="primary">gcvP</name>
    <name type="ordered locus">Smed_1182</name>
</gene>
<accession>A6U8Q3</accession>
<dbReference type="EC" id="1.4.4.2" evidence="1"/>
<dbReference type="EMBL" id="CP000738">
    <property type="protein sequence ID" value="ABR60033.1"/>
    <property type="molecule type" value="Genomic_DNA"/>
</dbReference>
<dbReference type="RefSeq" id="WP_011975351.1">
    <property type="nucleotide sequence ID" value="NC_009636.1"/>
</dbReference>
<dbReference type="RefSeq" id="YP_001326868.1">
    <property type="nucleotide sequence ID" value="NC_009636.1"/>
</dbReference>
<dbReference type="SMR" id="A6U8Q3"/>
<dbReference type="STRING" id="366394.Smed_1182"/>
<dbReference type="GeneID" id="61612037"/>
<dbReference type="KEGG" id="smd:Smed_1182"/>
<dbReference type="PATRIC" id="fig|366394.8.peg.4310"/>
<dbReference type="eggNOG" id="COG0403">
    <property type="taxonomic scope" value="Bacteria"/>
</dbReference>
<dbReference type="eggNOG" id="COG1003">
    <property type="taxonomic scope" value="Bacteria"/>
</dbReference>
<dbReference type="HOGENOM" id="CLU_004620_4_0_5"/>
<dbReference type="OrthoDB" id="9801272at2"/>
<dbReference type="Proteomes" id="UP000001108">
    <property type="component" value="Chromosome"/>
</dbReference>
<dbReference type="GO" id="GO:0005829">
    <property type="term" value="C:cytosol"/>
    <property type="evidence" value="ECO:0007669"/>
    <property type="project" value="TreeGrafter"/>
</dbReference>
<dbReference type="GO" id="GO:0005960">
    <property type="term" value="C:glycine cleavage complex"/>
    <property type="evidence" value="ECO:0007669"/>
    <property type="project" value="TreeGrafter"/>
</dbReference>
<dbReference type="GO" id="GO:0016594">
    <property type="term" value="F:glycine binding"/>
    <property type="evidence" value="ECO:0007669"/>
    <property type="project" value="TreeGrafter"/>
</dbReference>
<dbReference type="GO" id="GO:0004375">
    <property type="term" value="F:glycine dehydrogenase (decarboxylating) activity"/>
    <property type="evidence" value="ECO:0007669"/>
    <property type="project" value="UniProtKB-EC"/>
</dbReference>
<dbReference type="GO" id="GO:0030170">
    <property type="term" value="F:pyridoxal phosphate binding"/>
    <property type="evidence" value="ECO:0007669"/>
    <property type="project" value="TreeGrafter"/>
</dbReference>
<dbReference type="GO" id="GO:0019464">
    <property type="term" value="P:glycine decarboxylation via glycine cleavage system"/>
    <property type="evidence" value="ECO:0007669"/>
    <property type="project" value="UniProtKB-UniRule"/>
</dbReference>
<dbReference type="CDD" id="cd00613">
    <property type="entry name" value="GDC-P"/>
    <property type="match status" value="2"/>
</dbReference>
<dbReference type="FunFam" id="3.40.640.10:FF:000005">
    <property type="entry name" value="Glycine dehydrogenase (decarboxylating), mitochondrial"/>
    <property type="match status" value="1"/>
</dbReference>
<dbReference type="FunFam" id="3.90.1150.10:FF:000007">
    <property type="entry name" value="Glycine dehydrogenase (decarboxylating), mitochondrial"/>
    <property type="match status" value="1"/>
</dbReference>
<dbReference type="FunFam" id="3.40.640.10:FF:000007">
    <property type="entry name" value="glycine dehydrogenase (Decarboxylating), mitochondrial"/>
    <property type="match status" value="1"/>
</dbReference>
<dbReference type="Gene3D" id="3.90.1150.10">
    <property type="entry name" value="Aspartate Aminotransferase, domain 1"/>
    <property type="match status" value="2"/>
</dbReference>
<dbReference type="Gene3D" id="3.40.640.10">
    <property type="entry name" value="Type I PLP-dependent aspartate aminotransferase-like (Major domain)"/>
    <property type="match status" value="2"/>
</dbReference>
<dbReference type="HAMAP" id="MF_00711">
    <property type="entry name" value="GcvP"/>
    <property type="match status" value="1"/>
</dbReference>
<dbReference type="InterPro" id="IPR003437">
    <property type="entry name" value="GcvP"/>
</dbReference>
<dbReference type="InterPro" id="IPR049316">
    <property type="entry name" value="GDC-P_C"/>
</dbReference>
<dbReference type="InterPro" id="IPR049315">
    <property type="entry name" value="GDC-P_N"/>
</dbReference>
<dbReference type="InterPro" id="IPR020581">
    <property type="entry name" value="GDC_P"/>
</dbReference>
<dbReference type="InterPro" id="IPR015424">
    <property type="entry name" value="PyrdxlP-dep_Trfase"/>
</dbReference>
<dbReference type="InterPro" id="IPR015421">
    <property type="entry name" value="PyrdxlP-dep_Trfase_major"/>
</dbReference>
<dbReference type="InterPro" id="IPR015422">
    <property type="entry name" value="PyrdxlP-dep_Trfase_small"/>
</dbReference>
<dbReference type="NCBIfam" id="TIGR00461">
    <property type="entry name" value="gcvP"/>
    <property type="match status" value="1"/>
</dbReference>
<dbReference type="NCBIfam" id="NF001696">
    <property type="entry name" value="PRK00451.1"/>
    <property type="match status" value="1"/>
</dbReference>
<dbReference type="PANTHER" id="PTHR11773:SF1">
    <property type="entry name" value="GLYCINE DEHYDROGENASE (DECARBOXYLATING), MITOCHONDRIAL"/>
    <property type="match status" value="1"/>
</dbReference>
<dbReference type="PANTHER" id="PTHR11773">
    <property type="entry name" value="GLYCINE DEHYDROGENASE, DECARBOXYLATING"/>
    <property type="match status" value="1"/>
</dbReference>
<dbReference type="Pfam" id="PF21478">
    <property type="entry name" value="GcvP2_C"/>
    <property type="match status" value="1"/>
</dbReference>
<dbReference type="Pfam" id="PF02347">
    <property type="entry name" value="GDC-P"/>
    <property type="match status" value="2"/>
</dbReference>
<dbReference type="SUPFAM" id="SSF53383">
    <property type="entry name" value="PLP-dependent transferases"/>
    <property type="match status" value="2"/>
</dbReference>
<keyword id="KW-0560">Oxidoreductase</keyword>
<keyword id="KW-0663">Pyridoxal phosphate</keyword>
<sequence>MSMPKDFTFTDYKPYDFANRRHIGPSPAEMDEMLKVVGYPSLDALIDDTVPPSIRQQTPLAWGAPMTEREALDKLRETANRNRKVVSLIGQGYYGTITPPVIQRNILENPAWYTAYTPYQPEISQGRLEALLNFQTMVCDLTGLDVANASLLDEATAAAEAMAIAERVAKSKAKAFFVDENCHPQTIALLKTRAEPLGWQIVVGNPFEDLDAAIVFGAIFQYPGTYGHVRDFSGLIARLHELGAIAAVAADPLALALLKSPGEMGADIAVGSTQRFGVPVGYGGPHAAYMAVRDAYKRSMPGRLVGVSVDARGNRAYRLSLQTREQHIRREKATSNICTAQVLLAVMASMYAVFHGPEGIKAIAQSVHQKTVRLALGLEKLGYTVEPDVFFDTITVEVGKLQGIILKAAVAEDVNLRKIGTTKIGISLDERSRPITLEAVWRAFGGDFSVDQFEPDYRLPKELLRTSDYLTHPIFHMNRAESEMTRYMRRLADRDLALDRAMIPLGSCTMKLNATAEMLPITWPEFSEIHPFVPADQAMGYHHLIEDLSQKLCAITGYDAISMQPNSGAQGEYAGLLAIRAYHIANGNEHRDVCLIPTSAHGTNPASAQMAGMKVVVVKVSDAGEIAMDDFRAKAEQYAETLSCCMITYPSTHGVFEENVREVCEIVHKHGGQVYLDGANMNAMVGLSRPGDIGSDVSHLNLHKTFCIPHGGGGPGMGPIGVKAHLAPFLPGHPESGEHKGAVSAAPFGSASILPISWSYCLMMGGEGLTQATKVAILNANYVAARLKGAFDVLYKSAKGRVAHECIIDTRPLAESAGVTVDDVAKRLIDCGFHAPTMSWPVAGTLMIEPTESETKAELDRFCDALLAIREEARAIAEGRMDKINNPLKNAPHTVEDLVGDWDRPYSREQACFPPGAFRVDKYWSPVNRVDNVYGDRNLVCTCPPIESYAEAAE</sequence>
<protein>
    <recommendedName>
        <fullName evidence="1">Glycine dehydrogenase (decarboxylating)</fullName>
        <ecNumber evidence="1">1.4.4.2</ecNumber>
    </recommendedName>
    <alternativeName>
        <fullName evidence="1">Glycine cleavage system P-protein</fullName>
    </alternativeName>
    <alternativeName>
        <fullName evidence="1">Glycine decarboxylase</fullName>
    </alternativeName>
    <alternativeName>
        <fullName evidence="1">Glycine dehydrogenase (aminomethyl-transferring)</fullName>
    </alternativeName>
</protein>
<name>GCSP_SINMW</name>